<organism>
    <name type="scientific">Lactobacillus delbrueckii subsp. bulgaricus (strain ATCC 11842 / DSM 20081 / BCRC 10696 / JCM 1002 / NBRC 13953 / NCIMB 11778 / NCTC 12712 / WDCM 00102 / Lb 14)</name>
    <dbReference type="NCBI Taxonomy" id="390333"/>
    <lineage>
        <taxon>Bacteria</taxon>
        <taxon>Bacillati</taxon>
        <taxon>Bacillota</taxon>
        <taxon>Bacilli</taxon>
        <taxon>Lactobacillales</taxon>
        <taxon>Lactobacillaceae</taxon>
        <taxon>Lactobacillus</taxon>
    </lineage>
</organism>
<gene>
    <name evidence="1" type="primary">rpoE</name>
    <name type="ordered locus">Ldb0353</name>
</gene>
<dbReference type="EMBL" id="CR954253">
    <property type="protein sequence ID" value="CAI97191.1"/>
    <property type="molecule type" value="Genomic_DNA"/>
</dbReference>
<dbReference type="RefSeq" id="WP_003620758.1">
    <property type="nucleotide sequence ID" value="NZ_JQAV01000001.1"/>
</dbReference>
<dbReference type="SMR" id="Q1GBQ3"/>
<dbReference type="STRING" id="390333.Ldb0353"/>
<dbReference type="KEGG" id="ldb:Ldb0353"/>
<dbReference type="PATRIC" id="fig|390333.13.peg.435"/>
<dbReference type="eggNOG" id="COG3343">
    <property type="taxonomic scope" value="Bacteria"/>
</dbReference>
<dbReference type="HOGENOM" id="CLU_116648_0_0_9"/>
<dbReference type="BioCyc" id="LDEL390333:LDB_RS01480-MONOMER"/>
<dbReference type="Proteomes" id="UP000001259">
    <property type="component" value="Chromosome"/>
</dbReference>
<dbReference type="GO" id="GO:0000428">
    <property type="term" value="C:DNA-directed RNA polymerase complex"/>
    <property type="evidence" value="ECO:0007669"/>
    <property type="project" value="UniProtKB-KW"/>
</dbReference>
<dbReference type="GO" id="GO:0003899">
    <property type="term" value="F:DNA-directed RNA polymerase activity"/>
    <property type="evidence" value="ECO:0007669"/>
    <property type="project" value="UniProtKB-UniRule"/>
</dbReference>
<dbReference type="GO" id="GO:0006351">
    <property type="term" value="P:DNA-templated transcription"/>
    <property type="evidence" value="ECO:0007669"/>
    <property type="project" value="InterPro"/>
</dbReference>
<dbReference type="GO" id="GO:0006355">
    <property type="term" value="P:regulation of DNA-templated transcription"/>
    <property type="evidence" value="ECO:0007669"/>
    <property type="project" value="UniProtKB-UniRule"/>
</dbReference>
<dbReference type="Gene3D" id="1.10.10.1250">
    <property type="entry name" value="RNA polymerase, subunit delta, N-terminal domain"/>
    <property type="match status" value="1"/>
</dbReference>
<dbReference type="HAMAP" id="MF_00357">
    <property type="entry name" value="RNApol_bact_RpoE"/>
    <property type="match status" value="1"/>
</dbReference>
<dbReference type="InterPro" id="IPR007759">
    <property type="entry name" value="Asxl_HARE-HTH"/>
</dbReference>
<dbReference type="InterPro" id="IPR038087">
    <property type="entry name" value="RNAP_delta_N_dom_sf"/>
</dbReference>
<dbReference type="InterPro" id="IPR029757">
    <property type="entry name" value="RpoE"/>
</dbReference>
<dbReference type="NCBIfam" id="TIGR04567">
    <property type="entry name" value="RNAP_delt_lowGC"/>
    <property type="match status" value="1"/>
</dbReference>
<dbReference type="Pfam" id="PF05066">
    <property type="entry name" value="HARE-HTH"/>
    <property type="match status" value="1"/>
</dbReference>
<dbReference type="PROSITE" id="PS51913">
    <property type="entry name" value="HTH_HARE"/>
    <property type="match status" value="1"/>
</dbReference>
<keyword id="KW-0240">DNA-directed RNA polymerase</keyword>
<keyword id="KW-0548">Nucleotidyltransferase</keyword>
<keyword id="KW-1185">Reference proteome</keyword>
<keyword id="KW-0804">Transcription</keyword>
<keyword id="KW-0808">Transferase</keyword>
<sequence length="189" mass="21809">MGLADFKDVDRNELSMIEVAHAILEDRGERMAFADIVNEVQKYLNKSDEEIRQRLPQFYTDMNTDGRFISMGENVWALRTWFKFEAVDEEVDHPEDDGDEESTRKHHKKVNAFLATTEGDDVIDYENDDPEDEDLSDDSDADEDDADDNSGDDYDDNEDDDDDDSLLDGIEDQLSQMDDDDLDDDEDEE</sequence>
<name>RPOE_LACDA</name>
<reference key="1">
    <citation type="journal article" date="2006" name="Proc. Natl. Acad. Sci. U.S.A.">
        <title>The complete genome sequence of Lactobacillus bulgaricus reveals extensive and ongoing reductive evolution.</title>
        <authorList>
            <person name="van de Guchte M."/>
            <person name="Penaud S."/>
            <person name="Grimaldi C."/>
            <person name="Barbe V."/>
            <person name="Bryson K."/>
            <person name="Nicolas P."/>
            <person name="Robert C."/>
            <person name="Oztas S."/>
            <person name="Mangenot S."/>
            <person name="Couloux A."/>
            <person name="Loux V."/>
            <person name="Dervyn R."/>
            <person name="Bossy R."/>
            <person name="Bolotin A."/>
            <person name="Batto J.-M."/>
            <person name="Walunas T."/>
            <person name="Gibrat J.-F."/>
            <person name="Bessieres P."/>
            <person name="Weissenbach J."/>
            <person name="Ehrlich S.D."/>
            <person name="Maguin E."/>
        </authorList>
    </citation>
    <scope>NUCLEOTIDE SEQUENCE [LARGE SCALE GENOMIC DNA]</scope>
    <source>
        <strain>ATCC 11842 / DSM 20081 / BCRC 10696 / JCM 1002 / NBRC 13953 / NCIMB 11778 / NCTC 12712 / WDCM 00102 / Lb 14</strain>
    </source>
</reference>
<feature type="chain" id="PRO_0000303126" description="Probable DNA-directed RNA polymerase subunit delta">
    <location>
        <begin position="1"/>
        <end position="189"/>
    </location>
</feature>
<feature type="domain" description="HTH HARE-type" evidence="2">
    <location>
        <begin position="14"/>
        <end position="81"/>
    </location>
</feature>
<feature type="region of interest" description="Disordered" evidence="3">
    <location>
        <begin position="90"/>
        <end position="189"/>
    </location>
</feature>
<feature type="compositionally biased region" description="Acidic residues" evidence="3">
    <location>
        <begin position="90"/>
        <end position="100"/>
    </location>
</feature>
<feature type="compositionally biased region" description="Acidic residues" evidence="3">
    <location>
        <begin position="118"/>
        <end position="189"/>
    </location>
</feature>
<proteinExistence type="inferred from homology"/>
<comment type="function">
    <text evidence="1">Participates in both the initiation and recycling phases of transcription. In the presence of the delta subunit, RNAP displays an increased specificity of transcription, a decreased affinity for nucleic acids, and an increased efficiency of RNA synthesis because of enhanced recycling.</text>
</comment>
<comment type="subunit">
    <text evidence="1">RNAP is composed of a core of 2 alpha, a beta and a beta' subunits. The core is associated with a delta subunit and one of several sigma factors.</text>
</comment>
<comment type="similarity">
    <text evidence="1">Belongs to the RpoE family.</text>
</comment>
<evidence type="ECO:0000255" key="1">
    <source>
        <dbReference type="HAMAP-Rule" id="MF_00357"/>
    </source>
</evidence>
<evidence type="ECO:0000255" key="2">
    <source>
        <dbReference type="PROSITE-ProRule" id="PRU01261"/>
    </source>
</evidence>
<evidence type="ECO:0000256" key="3">
    <source>
        <dbReference type="SAM" id="MobiDB-lite"/>
    </source>
</evidence>
<protein>
    <recommendedName>
        <fullName evidence="1">Probable DNA-directed RNA polymerase subunit delta</fullName>
    </recommendedName>
    <alternativeName>
        <fullName evidence="1">RNAP delta factor</fullName>
    </alternativeName>
</protein>
<accession>Q1GBQ3</accession>